<protein>
    <recommendedName>
        <fullName evidence="1">Protein-glutamate methylesterase/protein-glutamine glutaminase</fullName>
        <ecNumber evidence="1">3.1.1.61</ecNumber>
        <ecNumber evidence="1">3.5.1.44</ecNumber>
    </recommendedName>
</protein>
<dbReference type="EC" id="3.1.1.61" evidence="1"/>
<dbReference type="EC" id="3.5.1.44" evidence="1"/>
<dbReference type="EMBL" id="CP000243">
    <property type="protein sequence ID" value="ABE07563.1"/>
    <property type="molecule type" value="Genomic_DNA"/>
</dbReference>
<dbReference type="RefSeq" id="WP_000036385.1">
    <property type="nucleotide sequence ID" value="NZ_CP064825.1"/>
</dbReference>
<dbReference type="SMR" id="Q1RAQ1"/>
<dbReference type="KEGG" id="eci:UTI89_C2087"/>
<dbReference type="HOGENOM" id="CLU_000445_51_0_6"/>
<dbReference type="Proteomes" id="UP000001952">
    <property type="component" value="Chromosome"/>
</dbReference>
<dbReference type="GO" id="GO:0005737">
    <property type="term" value="C:cytoplasm"/>
    <property type="evidence" value="ECO:0007669"/>
    <property type="project" value="UniProtKB-SubCell"/>
</dbReference>
<dbReference type="GO" id="GO:0000156">
    <property type="term" value="F:phosphorelay response regulator activity"/>
    <property type="evidence" value="ECO:0007669"/>
    <property type="project" value="InterPro"/>
</dbReference>
<dbReference type="GO" id="GO:0008984">
    <property type="term" value="F:protein-glutamate methylesterase activity"/>
    <property type="evidence" value="ECO:0007669"/>
    <property type="project" value="UniProtKB-UniRule"/>
</dbReference>
<dbReference type="GO" id="GO:0050568">
    <property type="term" value="F:protein-glutamine glutaminase activity"/>
    <property type="evidence" value="ECO:0007669"/>
    <property type="project" value="UniProtKB-UniRule"/>
</dbReference>
<dbReference type="GO" id="GO:0006935">
    <property type="term" value="P:chemotaxis"/>
    <property type="evidence" value="ECO:0007669"/>
    <property type="project" value="UniProtKB-UniRule"/>
</dbReference>
<dbReference type="CDD" id="cd16432">
    <property type="entry name" value="CheB_Rec"/>
    <property type="match status" value="1"/>
</dbReference>
<dbReference type="CDD" id="cd17541">
    <property type="entry name" value="REC_CheB-like"/>
    <property type="match status" value="1"/>
</dbReference>
<dbReference type="FunFam" id="3.40.50.180:FF:000001">
    <property type="entry name" value="Protein-glutamate methylesterase/protein-glutamine glutaminase"/>
    <property type="match status" value="1"/>
</dbReference>
<dbReference type="FunFam" id="3.40.50.2300:FF:000060">
    <property type="entry name" value="Protein-glutamate methylesterase/protein-glutamine glutaminase"/>
    <property type="match status" value="1"/>
</dbReference>
<dbReference type="Gene3D" id="3.40.50.2300">
    <property type="match status" value="1"/>
</dbReference>
<dbReference type="Gene3D" id="3.40.50.180">
    <property type="entry name" value="Methylesterase CheB, C-terminal domain"/>
    <property type="match status" value="1"/>
</dbReference>
<dbReference type="HAMAP" id="MF_00099">
    <property type="entry name" value="CheB_chemtxs"/>
    <property type="match status" value="1"/>
</dbReference>
<dbReference type="InterPro" id="IPR008248">
    <property type="entry name" value="CheB-like"/>
</dbReference>
<dbReference type="InterPro" id="IPR035909">
    <property type="entry name" value="CheB_C"/>
</dbReference>
<dbReference type="InterPro" id="IPR011006">
    <property type="entry name" value="CheY-like_superfamily"/>
</dbReference>
<dbReference type="InterPro" id="IPR000673">
    <property type="entry name" value="Sig_transdc_resp-reg_Me-estase"/>
</dbReference>
<dbReference type="InterPro" id="IPR001789">
    <property type="entry name" value="Sig_transdc_resp-reg_receiver"/>
</dbReference>
<dbReference type="NCBIfam" id="NF001965">
    <property type="entry name" value="PRK00742.1"/>
    <property type="match status" value="1"/>
</dbReference>
<dbReference type="NCBIfam" id="NF009206">
    <property type="entry name" value="PRK12555.1"/>
    <property type="match status" value="1"/>
</dbReference>
<dbReference type="PANTHER" id="PTHR42872">
    <property type="entry name" value="PROTEIN-GLUTAMATE METHYLESTERASE/PROTEIN-GLUTAMINE GLUTAMINASE"/>
    <property type="match status" value="1"/>
</dbReference>
<dbReference type="PANTHER" id="PTHR42872:SF6">
    <property type="entry name" value="PROTEIN-GLUTAMATE METHYLESTERASE_PROTEIN-GLUTAMINE GLUTAMINASE"/>
    <property type="match status" value="1"/>
</dbReference>
<dbReference type="Pfam" id="PF01339">
    <property type="entry name" value="CheB_methylest"/>
    <property type="match status" value="1"/>
</dbReference>
<dbReference type="Pfam" id="PF00072">
    <property type="entry name" value="Response_reg"/>
    <property type="match status" value="1"/>
</dbReference>
<dbReference type="PIRSF" id="PIRSF000876">
    <property type="entry name" value="RR_chemtxs_CheB"/>
    <property type="match status" value="1"/>
</dbReference>
<dbReference type="SMART" id="SM00448">
    <property type="entry name" value="REC"/>
    <property type="match status" value="1"/>
</dbReference>
<dbReference type="SUPFAM" id="SSF52172">
    <property type="entry name" value="CheY-like"/>
    <property type="match status" value="1"/>
</dbReference>
<dbReference type="SUPFAM" id="SSF52738">
    <property type="entry name" value="Methylesterase CheB, C-terminal domain"/>
    <property type="match status" value="1"/>
</dbReference>
<dbReference type="PROSITE" id="PS50122">
    <property type="entry name" value="CHEB"/>
    <property type="match status" value="1"/>
</dbReference>
<dbReference type="PROSITE" id="PS50110">
    <property type="entry name" value="RESPONSE_REGULATORY"/>
    <property type="match status" value="1"/>
</dbReference>
<feature type="chain" id="PRO_0000264274" description="Protein-glutamate methylesterase/protein-glutamine glutaminase">
    <location>
        <begin position="1"/>
        <end position="349"/>
    </location>
</feature>
<feature type="domain" description="Response regulatory" evidence="1">
    <location>
        <begin position="5"/>
        <end position="122"/>
    </location>
</feature>
<feature type="domain" description="CheB-type methylesterase" evidence="1">
    <location>
        <begin position="152"/>
        <end position="344"/>
    </location>
</feature>
<feature type="active site" evidence="1">
    <location>
        <position position="164"/>
    </location>
</feature>
<feature type="active site" evidence="1">
    <location>
        <position position="190"/>
    </location>
</feature>
<feature type="active site" evidence="1">
    <location>
        <position position="286"/>
    </location>
</feature>
<feature type="modified residue" description="4-aspartylphosphate" evidence="1">
    <location>
        <position position="56"/>
    </location>
</feature>
<sequence length="349" mass="37453">MSKIRVLSVDDSALMRQIMTEIINSHSDMEMVATAPDPLVARDLIKKFNPDVLTLDVEMPRMDGLDFLEKLMRLRPMPVVMVSSLTGKGSEVTLRALELGAIDFVTKPQLGIREGMLAYSEMIAEKVRTAAKASLAAHKPLSVPTTLKAGPLLSSEKLIAIGASTGGTEAIRHVLQPLPLSSPALLITQHMPPGFTRSFADRLNKLCQIGVKEAEDGERVLPGHAYIAPGDRHMELARSGANYQIKIHDGPAVNRHRPSVDVLFHSVAKQAGRNAVGVILTGMGNDGAAGMLAMRQAGAWTLAQNEASCVVFGMPREAINMGGVCEVVDLSQVSQQMLAKISAGQAIRI</sequence>
<proteinExistence type="inferred from homology"/>
<organism>
    <name type="scientific">Escherichia coli (strain UTI89 / UPEC)</name>
    <dbReference type="NCBI Taxonomy" id="364106"/>
    <lineage>
        <taxon>Bacteria</taxon>
        <taxon>Pseudomonadati</taxon>
        <taxon>Pseudomonadota</taxon>
        <taxon>Gammaproteobacteria</taxon>
        <taxon>Enterobacterales</taxon>
        <taxon>Enterobacteriaceae</taxon>
        <taxon>Escherichia</taxon>
    </lineage>
</organism>
<gene>
    <name evidence="1" type="primary">cheB</name>
    <name type="ordered locus">UTI89_C2087</name>
</gene>
<keyword id="KW-0145">Chemotaxis</keyword>
<keyword id="KW-0963">Cytoplasm</keyword>
<keyword id="KW-0378">Hydrolase</keyword>
<keyword id="KW-0597">Phosphoprotein</keyword>
<reference key="1">
    <citation type="journal article" date="2006" name="Proc. Natl. Acad. Sci. U.S.A.">
        <title>Identification of genes subject to positive selection in uropathogenic strains of Escherichia coli: a comparative genomics approach.</title>
        <authorList>
            <person name="Chen S.L."/>
            <person name="Hung C.-S."/>
            <person name="Xu J."/>
            <person name="Reigstad C.S."/>
            <person name="Magrini V."/>
            <person name="Sabo A."/>
            <person name="Blasiar D."/>
            <person name="Bieri T."/>
            <person name="Meyer R.R."/>
            <person name="Ozersky P."/>
            <person name="Armstrong J.R."/>
            <person name="Fulton R.S."/>
            <person name="Latreille J.P."/>
            <person name="Spieth J."/>
            <person name="Hooton T.M."/>
            <person name="Mardis E.R."/>
            <person name="Hultgren S.J."/>
            <person name="Gordon J.I."/>
        </authorList>
    </citation>
    <scope>NUCLEOTIDE SEQUENCE [LARGE SCALE GENOMIC DNA]</scope>
    <source>
        <strain>UTI89 / UPEC</strain>
    </source>
</reference>
<evidence type="ECO:0000255" key="1">
    <source>
        <dbReference type="HAMAP-Rule" id="MF_00099"/>
    </source>
</evidence>
<comment type="function">
    <text evidence="1">Involved in chemotaxis. Part of a chemotaxis signal transduction system that modulates chemotaxis in response to various stimuli. Catalyzes the demethylation of specific methylglutamate residues introduced into the chemoreceptors (methyl-accepting chemotaxis proteins or MCP) by CheR. Also mediates the irreversible deamidation of specific glutamine residues to glutamic acid.</text>
</comment>
<comment type="catalytic activity">
    <reaction evidence="1">
        <text>[protein]-L-glutamate 5-O-methyl ester + H2O = L-glutamyl-[protein] + methanol + H(+)</text>
        <dbReference type="Rhea" id="RHEA:23236"/>
        <dbReference type="Rhea" id="RHEA-COMP:10208"/>
        <dbReference type="Rhea" id="RHEA-COMP:10311"/>
        <dbReference type="ChEBI" id="CHEBI:15377"/>
        <dbReference type="ChEBI" id="CHEBI:15378"/>
        <dbReference type="ChEBI" id="CHEBI:17790"/>
        <dbReference type="ChEBI" id="CHEBI:29973"/>
        <dbReference type="ChEBI" id="CHEBI:82795"/>
        <dbReference type="EC" id="3.1.1.61"/>
    </reaction>
</comment>
<comment type="catalytic activity">
    <reaction evidence="1">
        <text>L-glutaminyl-[protein] + H2O = L-glutamyl-[protein] + NH4(+)</text>
        <dbReference type="Rhea" id="RHEA:16441"/>
        <dbReference type="Rhea" id="RHEA-COMP:10207"/>
        <dbReference type="Rhea" id="RHEA-COMP:10208"/>
        <dbReference type="ChEBI" id="CHEBI:15377"/>
        <dbReference type="ChEBI" id="CHEBI:28938"/>
        <dbReference type="ChEBI" id="CHEBI:29973"/>
        <dbReference type="ChEBI" id="CHEBI:30011"/>
        <dbReference type="EC" id="3.5.1.44"/>
    </reaction>
</comment>
<comment type="subcellular location">
    <subcellularLocation>
        <location evidence="1">Cytoplasm</location>
    </subcellularLocation>
</comment>
<comment type="domain">
    <text evidence="1">Contains a C-terminal catalytic domain, and an N-terminal region which modulates catalytic activity.</text>
</comment>
<comment type="PTM">
    <text evidence="1">Phosphorylated by CheA. Phosphorylation of the N-terminal regulatory domain activates the methylesterase activity.</text>
</comment>
<comment type="similarity">
    <text evidence="1">Belongs to the CheB family.</text>
</comment>
<accession>Q1RAQ1</accession>
<name>CHEB_ECOUT</name>